<gene>
    <name evidence="1" type="primary">recA</name>
    <name type="ordered locus">SDY_2895</name>
</gene>
<reference key="1">
    <citation type="journal article" date="2005" name="Nucleic Acids Res.">
        <title>Genome dynamics and diversity of Shigella species, the etiologic agents of bacillary dysentery.</title>
        <authorList>
            <person name="Yang F."/>
            <person name="Yang J."/>
            <person name="Zhang X."/>
            <person name="Chen L."/>
            <person name="Jiang Y."/>
            <person name="Yan Y."/>
            <person name="Tang X."/>
            <person name="Wang J."/>
            <person name="Xiong Z."/>
            <person name="Dong J."/>
            <person name="Xue Y."/>
            <person name="Zhu Y."/>
            <person name="Xu X."/>
            <person name="Sun L."/>
            <person name="Chen S."/>
            <person name="Nie H."/>
            <person name="Peng J."/>
            <person name="Xu J."/>
            <person name="Wang Y."/>
            <person name="Yuan Z."/>
            <person name="Wen Y."/>
            <person name="Yao Z."/>
            <person name="Shen Y."/>
            <person name="Qiang B."/>
            <person name="Hou Y."/>
            <person name="Yu J."/>
            <person name="Jin Q."/>
        </authorList>
    </citation>
    <scope>NUCLEOTIDE SEQUENCE [LARGE SCALE GENOMIC DNA]</scope>
    <source>
        <strain>Sd197</strain>
    </source>
</reference>
<feature type="chain" id="PRO_1000048002" description="Protein RecA">
    <location>
        <begin position="1"/>
        <end position="353"/>
    </location>
</feature>
<feature type="region of interest" description="Disordered" evidence="2">
    <location>
        <begin position="330"/>
        <end position="353"/>
    </location>
</feature>
<feature type="compositionally biased region" description="Acidic residues" evidence="2">
    <location>
        <begin position="339"/>
        <end position="353"/>
    </location>
</feature>
<feature type="binding site" evidence="1">
    <location>
        <begin position="67"/>
        <end position="74"/>
    </location>
    <ligand>
        <name>ATP</name>
        <dbReference type="ChEBI" id="CHEBI:30616"/>
    </ligand>
</feature>
<proteinExistence type="inferred from homology"/>
<name>RECA_SHIDS</name>
<evidence type="ECO:0000255" key="1">
    <source>
        <dbReference type="HAMAP-Rule" id="MF_00268"/>
    </source>
</evidence>
<evidence type="ECO:0000256" key="2">
    <source>
        <dbReference type="SAM" id="MobiDB-lite"/>
    </source>
</evidence>
<sequence>MAIDENKQKALAAALGQIEKQFGKGSIMRLGEDRSMDVETISTGSLSLDIALGAGGLPMGRIVEIYGPESSGKTTLTLQVIAAAQREGKTCAFIDAEHALDPIYARKLGVDIDNLLCSQPDTGEQALEICDALARSGAVDVIVVDSVAALTPKAEIEGEIGDSHMGLAARMMSQAMRKLAGNLKQSNTLLIFINQIRMKIGVMFGNPETTTGGNALKFYASVRLDIRRIGAVKEGENVVGSETRVKVVKNKIAAPFKQAEFQILYGEGINFYGELVDLGVKEKLIEKAGAWYSYKGEKIGQGKANATAWLKDNPETAKEIEKKVRELLLSNPNSTPDFSVDDSEGVAETNEDF</sequence>
<protein>
    <recommendedName>
        <fullName evidence="1">Protein RecA</fullName>
    </recommendedName>
    <alternativeName>
        <fullName evidence="1">Recombinase A</fullName>
    </alternativeName>
</protein>
<accession>Q32CM9</accession>
<organism>
    <name type="scientific">Shigella dysenteriae serotype 1 (strain Sd197)</name>
    <dbReference type="NCBI Taxonomy" id="300267"/>
    <lineage>
        <taxon>Bacteria</taxon>
        <taxon>Pseudomonadati</taxon>
        <taxon>Pseudomonadota</taxon>
        <taxon>Gammaproteobacteria</taxon>
        <taxon>Enterobacterales</taxon>
        <taxon>Enterobacteriaceae</taxon>
        <taxon>Shigella</taxon>
    </lineage>
</organism>
<keyword id="KW-0067">ATP-binding</keyword>
<keyword id="KW-0963">Cytoplasm</keyword>
<keyword id="KW-0227">DNA damage</keyword>
<keyword id="KW-0233">DNA recombination</keyword>
<keyword id="KW-0234">DNA repair</keyword>
<keyword id="KW-0238">DNA-binding</keyword>
<keyword id="KW-0547">Nucleotide-binding</keyword>
<keyword id="KW-1185">Reference proteome</keyword>
<keyword id="KW-0742">SOS response</keyword>
<comment type="function">
    <text evidence="1">Can catalyze the hydrolysis of ATP in the presence of single-stranded DNA, the ATP-dependent uptake of single-stranded DNA by duplex DNA, and the ATP-dependent hybridization of homologous single-stranded DNAs. It interacts with LexA causing its activation and leading to its autocatalytic cleavage.</text>
</comment>
<comment type="subcellular location">
    <subcellularLocation>
        <location evidence="1">Cytoplasm</location>
    </subcellularLocation>
</comment>
<comment type="similarity">
    <text evidence="1">Belongs to the RecA family.</text>
</comment>
<dbReference type="EMBL" id="CP000034">
    <property type="protein sequence ID" value="ABB62926.1"/>
    <property type="molecule type" value="Genomic_DNA"/>
</dbReference>
<dbReference type="RefSeq" id="WP_000963143.1">
    <property type="nucleotide sequence ID" value="NC_007606.1"/>
</dbReference>
<dbReference type="RefSeq" id="YP_404417.1">
    <property type="nucleotide sequence ID" value="NC_007606.1"/>
</dbReference>
<dbReference type="SMR" id="Q32CM9"/>
<dbReference type="STRING" id="300267.SDY_2895"/>
<dbReference type="EnsemblBacteria" id="ABB62926">
    <property type="protein sequence ID" value="ABB62926"/>
    <property type="gene ID" value="SDY_2895"/>
</dbReference>
<dbReference type="GeneID" id="93779312"/>
<dbReference type="KEGG" id="sdy:SDY_2895"/>
<dbReference type="PATRIC" id="fig|300267.13.peg.3478"/>
<dbReference type="HOGENOM" id="CLU_040469_3_2_6"/>
<dbReference type="Proteomes" id="UP000002716">
    <property type="component" value="Chromosome"/>
</dbReference>
<dbReference type="GO" id="GO:0005829">
    <property type="term" value="C:cytosol"/>
    <property type="evidence" value="ECO:0007669"/>
    <property type="project" value="TreeGrafter"/>
</dbReference>
<dbReference type="GO" id="GO:0005524">
    <property type="term" value="F:ATP binding"/>
    <property type="evidence" value="ECO:0007669"/>
    <property type="project" value="UniProtKB-UniRule"/>
</dbReference>
<dbReference type="GO" id="GO:0016887">
    <property type="term" value="F:ATP hydrolysis activity"/>
    <property type="evidence" value="ECO:0007669"/>
    <property type="project" value="InterPro"/>
</dbReference>
<dbReference type="GO" id="GO:0140664">
    <property type="term" value="F:ATP-dependent DNA damage sensor activity"/>
    <property type="evidence" value="ECO:0007669"/>
    <property type="project" value="InterPro"/>
</dbReference>
<dbReference type="GO" id="GO:0003684">
    <property type="term" value="F:damaged DNA binding"/>
    <property type="evidence" value="ECO:0007669"/>
    <property type="project" value="UniProtKB-UniRule"/>
</dbReference>
<dbReference type="GO" id="GO:0003697">
    <property type="term" value="F:single-stranded DNA binding"/>
    <property type="evidence" value="ECO:0007669"/>
    <property type="project" value="UniProtKB-UniRule"/>
</dbReference>
<dbReference type="GO" id="GO:0006310">
    <property type="term" value="P:DNA recombination"/>
    <property type="evidence" value="ECO:0007669"/>
    <property type="project" value="UniProtKB-UniRule"/>
</dbReference>
<dbReference type="GO" id="GO:0006281">
    <property type="term" value="P:DNA repair"/>
    <property type="evidence" value="ECO:0007669"/>
    <property type="project" value="UniProtKB-UniRule"/>
</dbReference>
<dbReference type="GO" id="GO:0009432">
    <property type="term" value="P:SOS response"/>
    <property type="evidence" value="ECO:0007669"/>
    <property type="project" value="UniProtKB-UniRule"/>
</dbReference>
<dbReference type="CDD" id="cd00983">
    <property type="entry name" value="RecA"/>
    <property type="match status" value="1"/>
</dbReference>
<dbReference type="FunFam" id="3.40.50.300:FF:000087">
    <property type="entry name" value="Recombinase RecA"/>
    <property type="match status" value="1"/>
</dbReference>
<dbReference type="Gene3D" id="3.40.50.300">
    <property type="entry name" value="P-loop containing nucleotide triphosphate hydrolases"/>
    <property type="match status" value="1"/>
</dbReference>
<dbReference type="HAMAP" id="MF_00268">
    <property type="entry name" value="RecA"/>
    <property type="match status" value="1"/>
</dbReference>
<dbReference type="InterPro" id="IPR003593">
    <property type="entry name" value="AAA+_ATPase"/>
</dbReference>
<dbReference type="InterPro" id="IPR013765">
    <property type="entry name" value="DNA_recomb/repair_RecA"/>
</dbReference>
<dbReference type="InterPro" id="IPR020584">
    <property type="entry name" value="DNA_recomb/repair_RecA_CS"/>
</dbReference>
<dbReference type="InterPro" id="IPR027417">
    <property type="entry name" value="P-loop_NTPase"/>
</dbReference>
<dbReference type="InterPro" id="IPR049261">
    <property type="entry name" value="RecA-like_C"/>
</dbReference>
<dbReference type="InterPro" id="IPR049428">
    <property type="entry name" value="RecA-like_N"/>
</dbReference>
<dbReference type="InterPro" id="IPR020588">
    <property type="entry name" value="RecA_ATP-bd"/>
</dbReference>
<dbReference type="InterPro" id="IPR023400">
    <property type="entry name" value="RecA_C_sf"/>
</dbReference>
<dbReference type="InterPro" id="IPR020587">
    <property type="entry name" value="RecA_monomer-monomer_interface"/>
</dbReference>
<dbReference type="NCBIfam" id="TIGR02012">
    <property type="entry name" value="tigrfam_recA"/>
    <property type="match status" value="1"/>
</dbReference>
<dbReference type="PANTHER" id="PTHR45900:SF1">
    <property type="entry name" value="MITOCHONDRIAL DNA REPAIR PROTEIN RECA HOMOLOG-RELATED"/>
    <property type="match status" value="1"/>
</dbReference>
<dbReference type="PANTHER" id="PTHR45900">
    <property type="entry name" value="RECA"/>
    <property type="match status" value="1"/>
</dbReference>
<dbReference type="Pfam" id="PF00154">
    <property type="entry name" value="RecA"/>
    <property type="match status" value="1"/>
</dbReference>
<dbReference type="Pfam" id="PF21096">
    <property type="entry name" value="RecA_C"/>
    <property type="match status" value="1"/>
</dbReference>
<dbReference type="PRINTS" id="PR00142">
    <property type="entry name" value="RECA"/>
</dbReference>
<dbReference type="SMART" id="SM00382">
    <property type="entry name" value="AAA"/>
    <property type="match status" value="1"/>
</dbReference>
<dbReference type="SUPFAM" id="SSF52540">
    <property type="entry name" value="P-loop containing nucleoside triphosphate hydrolases"/>
    <property type="match status" value="1"/>
</dbReference>
<dbReference type="SUPFAM" id="SSF54752">
    <property type="entry name" value="RecA protein, C-terminal domain"/>
    <property type="match status" value="1"/>
</dbReference>
<dbReference type="PROSITE" id="PS00321">
    <property type="entry name" value="RECA_1"/>
    <property type="match status" value="1"/>
</dbReference>
<dbReference type="PROSITE" id="PS50162">
    <property type="entry name" value="RECA_2"/>
    <property type="match status" value="1"/>
</dbReference>
<dbReference type="PROSITE" id="PS50163">
    <property type="entry name" value="RECA_3"/>
    <property type="match status" value="1"/>
</dbReference>